<dbReference type="EC" id="2.7.2.8" evidence="1"/>
<dbReference type="EMBL" id="CP001364">
    <property type="protein sequence ID" value="ACM55035.1"/>
    <property type="molecule type" value="Genomic_DNA"/>
</dbReference>
<dbReference type="SMR" id="B9LDR9"/>
<dbReference type="KEGG" id="chl:Chy400_3668"/>
<dbReference type="HOGENOM" id="CLU_053680_1_0_0"/>
<dbReference type="OrthoDB" id="9803155at2"/>
<dbReference type="UniPathway" id="UPA00068">
    <property type="reaction ID" value="UER00107"/>
</dbReference>
<dbReference type="GO" id="GO:0005737">
    <property type="term" value="C:cytoplasm"/>
    <property type="evidence" value="ECO:0007669"/>
    <property type="project" value="UniProtKB-SubCell"/>
</dbReference>
<dbReference type="GO" id="GO:0003991">
    <property type="term" value="F:acetylglutamate kinase activity"/>
    <property type="evidence" value="ECO:0007669"/>
    <property type="project" value="UniProtKB-UniRule"/>
</dbReference>
<dbReference type="GO" id="GO:0005524">
    <property type="term" value="F:ATP binding"/>
    <property type="evidence" value="ECO:0007669"/>
    <property type="project" value="UniProtKB-UniRule"/>
</dbReference>
<dbReference type="GO" id="GO:0042450">
    <property type="term" value="P:arginine biosynthetic process via ornithine"/>
    <property type="evidence" value="ECO:0007669"/>
    <property type="project" value="UniProtKB-UniRule"/>
</dbReference>
<dbReference type="GO" id="GO:0006526">
    <property type="term" value="P:L-arginine biosynthetic process"/>
    <property type="evidence" value="ECO:0007669"/>
    <property type="project" value="UniProtKB-UniPathway"/>
</dbReference>
<dbReference type="CDD" id="cd04238">
    <property type="entry name" value="AAK_NAGK-like"/>
    <property type="match status" value="1"/>
</dbReference>
<dbReference type="Gene3D" id="3.40.1160.10">
    <property type="entry name" value="Acetylglutamate kinase-like"/>
    <property type="match status" value="1"/>
</dbReference>
<dbReference type="HAMAP" id="MF_00082">
    <property type="entry name" value="ArgB"/>
    <property type="match status" value="1"/>
</dbReference>
<dbReference type="InterPro" id="IPR036393">
    <property type="entry name" value="AceGlu_kinase-like_sf"/>
</dbReference>
<dbReference type="InterPro" id="IPR004662">
    <property type="entry name" value="AcgluKinase_fam"/>
</dbReference>
<dbReference type="InterPro" id="IPR037528">
    <property type="entry name" value="ArgB"/>
</dbReference>
<dbReference type="InterPro" id="IPR001048">
    <property type="entry name" value="Asp/Glu/Uridylate_kinase"/>
</dbReference>
<dbReference type="NCBIfam" id="TIGR00761">
    <property type="entry name" value="argB"/>
    <property type="match status" value="1"/>
</dbReference>
<dbReference type="PANTHER" id="PTHR23342">
    <property type="entry name" value="N-ACETYLGLUTAMATE SYNTHASE"/>
    <property type="match status" value="1"/>
</dbReference>
<dbReference type="PANTHER" id="PTHR23342:SF0">
    <property type="entry name" value="N-ACETYLGLUTAMATE SYNTHASE, MITOCHONDRIAL"/>
    <property type="match status" value="1"/>
</dbReference>
<dbReference type="Pfam" id="PF00696">
    <property type="entry name" value="AA_kinase"/>
    <property type="match status" value="1"/>
</dbReference>
<dbReference type="PIRSF" id="PIRSF000728">
    <property type="entry name" value="NAGK"/>
    <property type="match status" value="1"/>
</dbReference>
<dbReference type="SUPFAM" id="SSF53633">
    <property type="entry name" value="Carbamate kinase-like"/>
    <property type="match status" value="1"/>
</dbReference>
<gene>
    <name evidence="1" type="primary">argB</name>
    <name type="ordered locus">Chy400_3668</name>
</gene>
<comment type="function">
    <text evidence="1">Catalyzes the ATP-dependent phosphorylation of N-acetyl-L-glutamate.</text>
</comment>
<comment type="catalytic activity">
    <reaction evidence="1">
        <text>N-acetyl-L-glutamate + ATP = N-acetyl-L-glutamyl 5-phosphate + ADP</text>
        <dbReference type="Rhea" id="RHEA:14629"/>
        <dbReference type="ChEBI" id="CHEBI:30616"/>
        <dbReference type="ChEBI" id="CHEBI:44337"/>
        <dbReference type="ChEBI" id="CHEBI:57936"/>
        <dbReference type="ChEBI" id="CHEBI:456216"/>
        <dbReference type="EC" id="2.7.2.8"/>
    </reaction>
</comment>
<comment type="pathway">
    <text evidence="1">Amino-acid biosynthesis; L-arginine biosynthesis; N(2)-acetyl-L-ornithine from L-glutamate: step 2/4.</text>
</comment>
<comment type="subcellular location">
    <subcellularLocation>
        <location evidence="1">Cytoplasm</location>
    </subcellularLocation>
</comment>
<comment type="similarity">
    <text evidence="1">Belongs to the acetylglutamate kinase family. ArgB subfamily.</text>
</comment>
<name>ARGB_CHLSY</name>
<sequence>MTTISVIKVSGHELDDPTFLGGLTAALRGFQQPLVLVHGGGKEISAAVERAGLQIEFVDGLRVTSPAVMDIMQMVVCGTINKRIVTALVNAGVKAIGLSGLDLGLLRCEPYRPAGRDLGRVGEVTAVDGAALLHLLALGWMPVIAPVALGATDGLSYNVNADMVAEAVAGALAGAELVFVSNVPGVLVDGRVVPALTPAAVEELIANGVISGGMIPKVRAALAALQRGASSVRIVNLAGLHDGGTRFTHGELSE</sequence>
<proteinExistence type="inferred from homology"/>
<evidence type="ECO:0000255" key="1">
    <source>
        <dbReference type="HAMAP-Rule" id="MF_00082"/>
    </source>
</evidence>
<protein>
    <recommendedName>
        <fullName evidence="1">Acetylglutamate kinase</fullName>
        <ecNumber evidence="1">2.7.2.8</ecNumber>
    </recommendedName>
    <alternativeName>
        <fullName evidence="1">N-acetyl-L-glutamate 5-phosphotransferase</fullName>
    </alternativeName>
    <alternativeName>
        <fullName evidence="1">NAG kinase</fullName>
        <shortName evidence="1">NAGK</shortName>
    </alternativeName>
</protein>
<keyword id="KW-0028">Amino-acid biosynthesis</keyword>
<keyword id="KW-0055">Arginine biosynthesis</keyword>
<keyword id="KW-0067">ATP-binding</keyword>
<keyword id="KW-0963">Cytoplasm</keyword>
<keyword id="KW-0418">Kinase</keyword>
<keyword id="KW-0547">Nucleotide-binding</keyword>
<keyword id="KW-0808">Transferase</keyword>
<organism>
    <name type="scientific">Chloroflexus aurantiacus (strain ATCC 29364 / DSM 637 / Y-400-fl)</name>
    <dbReference type="NCBI Taxonomy" id="480224"/>
    <lineage>
        <taxon>Bacteria</taxon>
        <taxon>Bacillati</taxon>
        <taxon>Chloroflexota</taxon>
        <taxon>Chloroflexia</taxon>
        <taxon>Chloroflexales</taxon>
        <taxon>Chloroflexineae</taxon>
        <taxon>Chloroflexaceae</taxon>
        <taxon>Chloroflexus</taxon>
    </lineage>
</organism>
<feature type="chain" id="PRO_1000118347" description="Acetylglutamate kinase">
    <location>
        <begin position="1"/>
        <end position="254"/>
    </location>
</feature>
<feature type="binding site" evidence="1">
    <location>
        <begin position="40"/>
        <end position="41"/>
    </location>
    <ligand>
        <name>substrate</name>
    </ligand>
</feature>
<feature type="binding site" evidence="1">
    <location>
        <position position="62"/>
    </location>
    <ligand>
        <name>substrate</name>
    </ligand>
</feature>
<feature type="binding site" evidence="1">
    <location>
        <position position="158"/>
    </location>
    <ligand>
        <name>substrate</name>
    </ligand>
</feature>
<feature type="site" description="Transition state stabilizer" evidence="1">
    <location>
        <position position="8"/>
    </location>
</feature>
<feature type="site" description="Transition state stabilizer" evidence="1">
    <location>
        <position position="217"/>
    </location>
</feature>
<reference key="1">
    <citation type="submission" date="2009-01" db="EMBL/GenBank/DDBJ databases">
        <title>Complete sequence of Chloroflexus sp. Y-400-fl.</title>
        <authorList>
            <consortium name="US DOE Joint Genome Institute"/>
            <person name="Lucas S."/>
            <person name="Copeland A."/>
            <person name="Lapidus A."/>
            <person name="Glavina del Rio T."/>
            <person name="Dalin E."/>
            <person name="Tice H."/>
            <person name="Bruce D."/>
            <person name="Goodwin L."/>
            <person name="Pitluck S."/>
            <person name="Sims D."/>
            <person name="Kiss H."/>
            <person name="Brettin T."/>
            <person name="Detter J.C."/>
            <person name="Han C."/>
            <person name="Larimer F."/>
            <person name="Land M."/>
            <person name="Hauser L."/>
            <person name="Kyrpides N."/>
            <person name="Ovchinnikova G."/>
            <person name="Bryant D.A."/>
            <person name="Richardson P."/>
        </authorList>
    </citation>
    <scope>NUCLEOTIDE SEQUENCE [LARGE SCALE GENOMIC DNA]</scope>
    <source>
        <strain>ATCC 29364 / DSM 637 / Y-400-fl</strain>
    </source>
</reference>
<accession>B9LDR9</accession>